<organism>
    <name type="scientific">Aspergillus niger (strain ATCC MYA-4892 / CBS 513.88 / FGSC A1513)</name>
    <dbReference type="NCBI Taxonomy" id="425011"/>
    <lineage>
        <taxon>Eukaryota</taxon>
        <taxon>Fungi</taxon>
        <taxon>Dikarya</taxon>
        <taxon>Ascomycota</taxon>
        <taxon>Pezizomycotina</taxon>
        <taxon>Eurotiomycetes</taxon>
        <taxon>Eurotiomycetidae</taxon>
        <taxon>Eurotiales</taxon>
        <taxon>Aspergillaceae</taxon>
        <taxon>Aspergillus</taxon>
        <taxon>Aspergillus subgen. Circumdati</taxon>
    </lineage>
</organism>
<dbReference type="EC" id="3.2.1.8"/>
<dbReference type="EMBL" id="AM270327">
    <property type="protein sequence ID" value="CAK46731.1"/>
    <property type="molecule type" value="Genomic_DNA"/>
</dbReference>
<dbReference type="RefSeq" id="XP_001401361.1">
    <property type="nucleotide sequence ID" value="XM_001401324.1"/>
</dbReference>
<dbReference type="SMR" id="A2R4D1"/>
<dbReference type="EnsemblFungi" id="CAK46731">
    <property type="protein sequence ID" value="CAK46731"/>
    <property type="gene ID" value="An14g07390"/>
</dbReference>
<dbReference type="GeneID" id="4987596"/>
<dbReference type="KEGG" id="ang:An14g07390"/>
<dbReference type="VEuPathDB" id="FungiDB:An14g07390"/>
<dbReference type="HOGENOM" id="CLU_052631_3_2_1"/>
<dbReference type="UniPathway" id="UPA00114"/>
<dbReference type="Proteomes" id="UP000006706">
    <property type="component" value="Chromosome 1R"/>
</dbReference>
<dbReference type="GO" id="GO:0005576">
    <property type="term" value="C:extracellular region"/>
    <property type="evidence" value="ECO:0007669"/>
    <property type="project" value="UniProtKB-SubCell"/>
</dbReference>
<dbReference type="GO" id="GO:0031176">
    <property type="term" value="F:endo-1,4-beta-xylanase activity"/>
    <property type="evidence" value="ECO:0007669"/>
    <property type="project" value="UniProtKB-EC"/>
</dbReference>
<dbReference type="GO" id="GO:0045493">
    <property type="term" value="P:xylan catabolic process"/>
    <property type="evidence" value="ECO:0007669"/>
    <property type="project" value="UniProtKB-UniPathway"/>
</dbReference>
<dbReference type="FunFam" id="2.60.120.180:FF:000002">
    <property type="entry name" value="Endo-1,4-beta-xylanase A"/>
    <property type="match status" value="1"/>
</dbReference>
<dbReference type="Gene3D" id="2.60.120.180">
    <property type="match status" value="1"/>
</dbReference>
<dbReference type="InterPro" id="IPR013320">
    <property type="entry name" value="ConA-like_dom_sf"/>
</dbReference>
<dbReference type="InterPro" id="IPR013319">
    <property type="entry name" value="GH11/12"/>
</dbReference>
<dbReference type="InterPro" id="IPR018208">
    <property type="entry name" value="GH11_AS_1"/>
</dbReference>
<dbReference type="InterPro" id="IPR033123">
    <property type="entry name" value="GH11_dom"/>
</dbReference>
<dbReference type="InterPro" id="IPR001137">
    <property type="entry name" value="Glyco_hydro_11"/>
</dbReference>
<dbReference type="PANTHER" id="PTHR46828">
    <property type="entry name" value="ENDO-1,4-BETA-XYLANASE A-RELATED"/>
    <property type="match status" value="1"/>
</dbReference>
<dbReference type="PANTHER" id="PTHR46828:SF2">
    <property type="entry name" value="ENDO-1,4-BETA-XYLANASE A-RELATED"/>
    <property type="match status" value="1"/>
</dbReference>
<dbReference type="Pfam" id="PF00457">
    <property type="entry name" value="Glyco_hydro_11"/>
    <property type="match status" value="1"/>
</dbReference>
<dbReference type="PRINTS" id="PR00911">
    <property type="entry name" value="GLHYDRLASE11"/>
</dbReference>
<dbReference type="SUPFAM" id="SSF49899">
    <property type="entry name" value="Concanavalin A-like lectins/glucanases"/>
    <property type="match status" value="1"/>
</dbReference>
<dbReference type="PROSITE" id="PS00776">
    <property type="entry name" value="GH11_1"/>
    <property type="match status" value="1"/>
</dbReference>
<dbReference type="PROSITE" id="PS51761">
    <property type="entry name" value="GH11_3"/>
    <property type="match status" value="1"/>
</dbReference>
<reference key="1">
    <citation type="journal article" date="2007" name="Nat. Biotechnol.">
        <title>Genome sequencing and analysis of the versatile cell factory Aspergillus niger CBS 513.88.</title>
        <authorList>
            <person name="Pel H.J."/>
            <person name="de Winde J.H."/>
            <person name="Archer D.B."/>
            <person name="Dyer P.S."/>
            <person name="Hofmann G."/>
            <person name="Schaap P.J."/>
            <person name="Turner G."/>
            <person name="de Vries R.P."/>
            <person name="Albang R."/>
            <person name="Albermann K."/>
            <person name="Andersen M.R."/>
            <person name="Bendtsen J.D."/>
            <person name="Benen J.A.E."/>
            <person name="van den Berg M."/>
            <person name="Breestraat S."/>
            <person name="Caddick M.X."/>
            <person name="Contreras R."/>
            <person name="Cornell M."/>
            <person name="Coutinho P.M."/>
            <person name="Danchin E.G.J."/>
            <person name="Debets A.J.M."/>
            <person name="Dekker P."/>
            <person name="van Dijck P.W.M."/>
            <person name="van Dijk A."/>
            <person name="Dijkhuizen L."/>
            <person name="Driessen A.J.M."/>
            <person name="d'Enfert C."/>
            <person name="Geysens S."/>
            <person name="Goosen C."/>
            <person name="Groot G.S.P."/>
            <person name="de Groot P.W.J."/>
            <person name="Guillemette T."/>
            <person name="Henrissat B."/>
            <person name="Herweijer M."/>
            <person name="van den Hombergh J.P.T.W."/>
            <person name="van den Hondel C.A.M.J.J."/>
            <person name="van der Heijden R.T.J.M."/>
            <person name="van der Kaaij R.M."/>
            <person name="Klis F.M."/>
            <person name="Kools H.J."/>
            <person name="Kubicek C.P."/>
            <person name="van Kuyk P.A."/>
            <person name="Lauber J."/>
            <person name="Lu X."/>
            <person name="van der Maarel M.J.E.C."/>
            <person name="Meulenberg R."/>
            <person name="Menke H."/>
            <person name="Mortimer M.A."/>
            <person name="Nielsen J."/>
            <person name="Oliver S.G."/>
            <person name="Olsthoorn M."/>
            <person name="Pal K."/>
            <person name="van Peij N.N.M.E."/>
            <person name="Ram A.F.J."/>
            <person name="Rinas U."/>
            <person name="Roubos J.A."/>
            <person name="Sagt C.M.J."/>
            <person name="Schmoll M."/>
            <person name="Sun J."/>
            <person name="Ussery D."/>
            <person name="Varga J."/>
            <person name="Vervecken W."/>
            <person name="van de Vondervoort P.J.J."/>
            <person name="Wedler H."/>
            <person name="Woesten H.A.B."/>
            <person name="Zeng A.-P."/>
            <person name="van Ooyen A.J.J."/>
            <person name="Visser J."/>
            <person name="Stam H."/>
        </authorList>
    </citation>
    <scope>NUCLEOTIDE SEQUENCE [LARGE SCALE GENOMIC DNA]</scope>
    <source>
        <strain>ATCC MYA-4892 / CBS 513.88 / FGSC A1513</strain>
    </source>
</reference>
<sequence length="211" mass="22639">MKVTAAFASLLLTAFAAPAPEPVLVSRSAGINYVQNYNGNLGDFTYDESTGTFSMYWEDGVSSDFVVGLGWTTGSSKSITYSAQYSASSSSSYLAVYGWVNSPQAEYYIVEDYGDYNPCSSATSLGTVYSDGSTYQVCTDTRTNAPSITGTSTFTQYFSVRESTRTSGTVTIANHFNFWAQHGFGNSNFNYQVMAVEAWNGAGSASVTISS</sequence>
<protein>
    <recommendedName>
        <fullName>Probable endo-1,4-beta-xylanase 5</fullName>
        <shortName>Xylanase 5</shortName>
        <ecNumber>3.2.1.8</ecNumber>
    </recommendedName>
    <alternativeName>
        <fullName>1,4-beta-D-xylan xylanohydrolase 5</fullName>
    </alternativeName>
</protein>
<evidence type="ECO:0000250" key="1"/>
<evidence type="ECO:0000255" key="2"/>
<evidence type="ECO:0000255" key="3">
    <source>
        <dbReference type="PROSITE-ProRule" id="PRU01097"/>
    </source>
</evidence>
<evidence type="ECO:0000255" key="4">
    <source>
        <dbReference type="PROSITE-ProRule" id="PRU10062"/>
    </source>
</evidence>
<evidence type="ECO:0000305" key="5"/>
<feature type="signal peptide" evidence="2">
    <location>
        <begin position="1"/>
        <end position="16"/>
    </location>
</feature>
<feature type="chain" id="PRO_5000220988" description="Probable endo-1,4-beta-xylanase 5">
    <location>
        <begin position="17"/>
        <end position="211"/>
    </location>
</feature>
<feature type="domain" description="GH11" evidence="3">
    <location>
        <begin position="19"/>
        <end position="210"/>
    </location>
</feature>
<feature type="active site" description="Nucleophile" evidence="4">
    <location>
        <position position="106"/>
    </location>
</feature>
<feature type="active site" description="Proton donor" evidence="1">
    <location>
        <position position="197"/>
    </location>
</feature>
<proteinExistence type="inferred from homology"/>
<accession>A2R4D1</accession>
<keyword id="KW-0119">Carbohydrate metabolism</keyword>
<keyword id="KW-0326">Glycosidase</keyword>
<keyword id="KW-0378">Hydrolase</keyword>
<keyword id="KW-0624">Polysaccharide degradation</keyword>
<keyword id="KW-1185">Reference proteome</keyword>
<keyword id="KW-0964">Secreted</keyword>
<keyword id="KW-0732">Signal</keyword>
<keyword id="KW-0858">Xylan degradation</keyword>
<comment type="function">
    <text evidence="1">Endo-1,4-beta-xylanase involved in the hydrolysis of xylan, a major structural heterogeneous polysaccharide found in plant biomass representing the second most abundant polysaccharide in the biosphere, after cellulose.</text>
</comment>
<comment type="catalytic activity">
    <reaction>
        <text>Endohydrolysis of (1-&gt;4)-beta-D-xylosidic linkages in xylans.</text>
        <dbReference type="EC" id="3.2.1.8"/>
    </reaction>
</comment>
<comment type="pathway">
    <text>Glycan degradation; xylan degradation.</text>
</comment>
<comment type="subcellular location">
    <subcellularLocation>
        <location evidence="1">Secreted</location>
    </subcellularLocation>
</comment>
<comment type="similarity">
    <text evidence="5">Belongs to the glycosyl hydrolase 11 (cellulase G) family.</text>
</comment>
<gene>
    <name type="primary">XYN5</name>
    <name type="ORF">An14g07390</name>
</gene>
<name>XYN5_ASPNC</name>